<proteinExistence type="evidence at protein level"/>
<dbReference type="EMBL" id="AK048437">
    <property type="protein sequence ID" value="BAC33336.1"/>
    <property type="molecule type" value="mRNA"/>
</dbReference>
<dbReference type="CCDS" id="CCDS22299.1"/>
<dbReference type="RefSeq" id="NP_765995.1">
    <property type="nucleotide sequence ID" value="NM_172407.3"/>
</dbReference>
<dbReference type="SMR" id="Q8BI72"/>
<dbReference type="BioGRID" id="214348">
    <property type="interactions" value="25"/>
</dbReference>
<dbReference type="FunCoup" id="Q8BI72">
    <property type="interactions" value="4324"/>
</dbReference>
<dbReference type="IntAct" id="Q8BI72">
    <property type="interactions" value="17"/>
</dbReference>
<dbReference type="STRING" id="10090.ENSMUSP00000148441"/>
<dbReference type="GlyGen" id="Q8BI72">
    <property type="glycosylation" value="3 sites, 2 N-linked glycans (2 sites), 1 O-linked glycan (1 site)"/>
</dbReference>
<dbReference type="iPTMnet" id="Q8BI72"/>
<dbReference type="PhosphoSitePlus" id="Q8BI72"/>
<dbReference type="SwissPalm" id="Q8BI72"/>
<dbReference type="jPOST" id="Q8BI72"/>
<dbReference type="PaxDb" id="10090-ENSMUSP00000043713"/>
<dbReference type="PeptideAtlas" id="Q8BI72"/>
<dbReference type="ProteomicsDB" id="265435"/>
<dbReference type="Pumba" id="Q8BI72"/>
<dbReference type="Antibodypedia" id="17295">
    <property type="antibodies" value="222 antibodies from 32 providers"/>
</dbReference>
<dbReference type="DNASU" id="70925"/>
<dbReference type="Ensembl" id="ENSMUST00000212175.2">
    <property type="protein sequence ID" value="ENSMUSP00000148441.2"/>
    <property type="gene ID" value="ENSMUSG00000038069.7"/>
</dbReference>
<dbReference type="GeneID" id="70925"/>
<dbReference type="KEGG" id="mmu:70925"/>
<dbReference type="UCSC" id="uc009lrh.2">
    <property type="organism name" value="mouse"/>
</dbReference>
<dbReference type="AGR" id="MGI:1918175"/>
<dbReference type="CTD" id="55602"/>
<dbReference type="MGI" id="MGI:1918175">
    <property type="gene designation" value="Cdkn2aip"/>
</dbReference>
<dbReference type="VEuPathDB" id="HostDB:ENSMUSG00000038069"/>
<dbReference type="eggNOG" id="ENOG502S4FT">
    <property type="taxonomic scope" value="Eukaryota"/>
</dbReference>
<dbReference type="GeneTree" id="ENSGT00940000158376"/>
<dbReference type="HOGENOM" id="CLU_019689_0_0_1"/>
<dbReference type="InParanoid" id="Q8BI72"/>
<dbReference type="OMA" id="PNMAQEV"/>
<dbReference type="OrthoDB" id="2359216at2759"/>
<dbReference type="PhylomeDB" id="Q8BI72"/>
<dbReference type="TreeFam" id="TF333807"/>
<dbReference type="BioGRID-ORCS" id="70925">
    <property type="hits" value="6 hits in 78 CRISPR screens"/>
</dbReference>
<dbReference type="ChiTaRS" id="Cdkn2aip">
    <property type="organism name" value="mouse"/>
</dbReference>
<dbReference type="PRO" id="PR:Q8BI72"/>
<dbReference type="Proteomes" id="UP000000589">
    <property type="component" value="Chromosome 8"/>
</dbReference>
<dbReference type="RNAct" id="Q8BI72">
    <property type="molecule type" value="protein"/>
</dbReference>
<dbReference type="Bgee" id="ENSMUSG00000038069">
    <property type="expression patterns" value="Expressed in spermatid and 218 other cell types or tissues"/>
</dbReference>
<dbReference type="ExpressionAtlas" id="Q8BI72">
    <property type="expression patterns" value="baseline and differential"/>
</dbReference>
<dbReference type="GO" id="GO:0001652">
    <property type="term" value="C:granular component"/>
    <property type="evidence" value="ECO:0007669"/>
    <property type="project" value="Ensembl"/>
</dbReference>
<dbReference type="GO" id="GO:0005654">
    <property type="term" value="C:nucleoplasm"/>
    <property type="evidence" value="ECO:0007669"/>
    <property type="project" value="UniProtKB-SubCell"/>
</dbReference>
<dbReference type="GO" id="GO:0005634">
    <property type="term" value="C:nucleus"/>
    <property type="evidence" value="ECO:0000314"/>
    <property type="project" value="MGI"/>
</dbReference>
<dbReference type="GO" id="GO:0002039">
    <property type="term" value="F:p53 binding"/>
    <property type="evidence" value="ECO:0007669"/>
    <property type="project" value="Ensembl"/>
</dbReference>
<dbReference type="GO" id="GO:0003723">
    <property type="term" value="F:RNA binding"/>
    <property type="evidence" value="ECO:0007669"/>
    <property type="project" value="UniProtKB-KW"/>
</dbReference>
<dbReference type="GO" id="GO:0006974">
    <property type="term" value="P:DNA damage response"/>
    <property type="evidence" value="ECO:0000250"/>
    <property type="project" value="UniProtKB"/>
</dbReference>
<dbReference type="GO" id="GO:0030308">
    <property type="term" value="P:negative regulation of cell growth"/>
    <property type="evidence" value="ECO:0007669"/>
    <property type="project" value="Ensembl"/>
</dbReference>
<dbReference type="GO" id="GO:0030307">
    <property type="term" value="P:positive regulation of cell growth"/>
    <property type="evidence" value="ECO:0000250"/>
    <property type="project" value="UniProtKB"/>
</dbReference>
<dbReference type="GO" id="GO:0009967">
    <property type="term" value="P:positive regulation of signal transduction"/>
    <property type="evidence" value="ECO:0007669"/>
    <property type="project" value="Ensembl"/>
</dbReference>
<dbReference type="GO" id="GO:0031647">
    <property type="term" value="P:regulation of protein stability"/>
    <property type="evidence" value="ECO:0007669"/>
    <property type="project" value="Ensembl"/>
</dbReference>
<dbReference type="InterPro" id="IPR014720">
    <property type="entry name" value="dsRBD_dom"/>
</dbReference>
<dbReference type="InterPro" id="IPR021859">
    <property type="entry name" value="XTBD"/>
</dbReference>
<dbReference type="PANTHER" id="PTHR16148:SF11">
    <property type="entry name" value="CDKN2A-INTERACTING PROTEIN"/>
    <property type="match status" value="1"/>
</dbReference>
<dbReference type="PANTHER" id="PTHR16148">
    <property type="entry name" value="NF-KAPPA-B-REPRESSING FACTOR-RELATED"/>
    <property type="match status" value="1"/>
</dbReference>
<dbReference type="Pfam" id="PF11952">
    <property type="entry name" value="XTBD"/>
    <property type="match status" value="1"/>
</dbReference>
<dbReference type="PROSITE" id="PS50137">
    <property type="entry name" value="DS_RBD"/>
    <property type="match status" value="1"/>
</dbReference>
<dbReference type="PROSITE" id="PS51827">
    <property type="entry name" value="XTBD"/>
    <property type="match status" value="1"/>
</dbReference>
<comment type="function">
    <text evidence="1">Regulates DNA damage response and cell proliferation in a dose-dependent manner through a number of signaling pathways involved in cell proliferation, apoptosis and senescence.</text>
</comment>
<comment type="subunit">
    <text evidence="1">Interacts with CDKN2A/p14ARF, p53/TP53 and MDM2. Interacts with CHEK2 and MAPK3. Interacts with XRN2.</text>
</comment>
<comment type="subcellular location">
    <subcellularLocation>
        <location evidence="1">Nucleus</location>
        <location evidence="1">Nucleoplasm</location>
    </subcellularLocation>
</comment>
<comment type="PTM">
    <text evidence="1">May be ubiquitinated.</text>
</comment>
<comment type="similarity">
    <text evidence="5">Belongs to the CARF family.</text>
</comment>
<feature type="initiator methionine" description="Removed" evidence="1">
    <location>
        <position position="1"/>
    </location>
</feature>
<feature type="chain" id="PRO_0000324340" description="CDKN2A-interacting protein">
    <location>
        <begin position="2"/>
        <end position="563"/>
    </location>
</feature>
<feature type="domain" description="XRN2-binding (XTBD)" evidence="3">
    <location>
        <begin position="19"/>
        <end position="126"/>
    </location>
</feature>
<feature type="domain" description="DRBM" evidence="2">
    <location>
        <begin position="445"/>
        <end position="520"/>
    </location>
</feature>
<feature type="region of interest" description="Disordered" evidence="4">
    <location>
        <begin position="122"/>
        <end position="289"/>
    </location>
</feature>
<feature type="region of interest" description="Disordered" evidence="4">
    <location>
        <begin position="304"/>
        <end position="351"/>
    </location>
</feature>
<feature type="compositionally biased region" description="Basic and acidic residues" evidence="4">
    <location>
        <begin position="147"/>
        <end position="160"/>
    </location>
</feature>
<feature type="compositionally biased region" description="Low complexity" evidence="4">
    <location>
        <begin position="168"/>
        <end position="216"/>
    </location>
</feature>
<feature type="compositionally biased region" description="Low complexity" evidence="4">
    <location>
        <begin position="234"/>
        <end position="248"/>
    </location>
</feature>
<feature type="compositionally biased region" description="Polar residues" evidence="4">
    <location>
        <begin position="249"/>
        <end position="262"/>
    </location>
</feature>
<feature type="compositionally biased region" description="Low complexity" evidence="4">
    <location>
        <begin position="270"/>
        <end position="280"/>
    </location>
</feature>
<feature type="modified residue" description="N-acetylalanine" evidence="1">
    <location>
        <position position="2"/>
    </location>
</feature>
<feature type="modified residue" description="Phosphoserine" evidence="6">
    <location>
        <position position="124"/>
    </location>
</feature>
<feature type="modified residue" description="Phosphoserine" evidence="6">
    <location>
        <position position="234"/>
    </location>
</feature>
<feature type="modified residue" description="Phosphothreonine" evidence="1">
    <location>
        <position position="340"/>
    </location>
</feature>
<feature type="modified residue" description="Phosphoserine" evidence="1">
    <location>
        <position position="371"/>
    </location>
</feature>
<feature type="cross-link" description="Glycyl lysine isopeptide (Lys-Gly) (interchain with G-Cter in SUMO1)" evidence="1">
    <location>
        <position position="177"/>
    </location>
</feature>
<organism>
    <name type="scientific">Mus musculus</name>
    <name type="common">Mouse</name>
    <dbReference type="NCBI Taxonomy" id="10090"/>
    <lineage>
        <taxon>Eukaryota</taxon>
        <taxon>Metazoa</taxon>
        <taxon>Chordata</taxon>
        <taxon>Craniata</taxon>
        <taxon>Vertebrata</taxon>
        <taxon>Euteleostomi</taxon>
        <taxon>Mammalia</taxon>
        <taxon>Eutheria</taxon>
        <taxon>Euarchontoglires</taxon>
        <taxon>Glires</taxon>
        <taxon>Rodentia</taxon>
        <taxon>Myomorpha</taxon>
        <taxon>Muroidea</taxon>
        <taxon>Muridae</taxon>
        <taxon>Murinae</taxon>
        <taxon>Mus</taxon>
        <taxon>Mus</taxon>
    </lineage>
</organism>
<protein>
    <recommendedName>
        <fullName>CDKN2A-interacting protein</fullName>
    </recommendedName>
    <alternativeName>
        <fullName>Collaborator of ARF</fullName>
    </alternativeName>
</protein>
<sequence length="563" mass="59745">MAQEVSEYLSQNPRVAAWVETLRCEGETDKHWRHRREFLLRNAGDLVPATDETADAESGARTRQLQQLVSFSMAWANHVFLGCRYPQKVMDKILSMAEGIKVTDAPIHTTRDELVAKVKKRGISSSNEGVEEPSKKRAVEGKNNSSVERDHGKKSAKTDRSAAQQENSSPSRGSSTKSESGGTSARSSSSGSHQDSATSEGDRSVCSQSSSNSSQVTAGSGKALESEAPHKRGSASFVSSLLKSSMNSHMTQSTDNRQQSGSPKKGALEGSSGSASQSSSEIEVPLLGSSGSAEVELPLLSCKSSSETASSGLTSKSSSEANISSSVSKNSSSSGSSLLTPQSSSTNPSLLTSKSTAQVAASLLATKSGASLGSVSQLAAKSGSQSSTSQLPSKSTSQASESSVKFACRKLTNEDIKQKQPFFNRLYKTVAWKLVAVGGFSPTVNHGELLNAAIEALKATLDVFFVPLKELADLPQNKSSQESIVCELRCKSVYLGTGCGKSKENAKAVASREALKLFLKKKVVVKICKRKYRGSEIEDLVLLDEEARPVNLPPALKHPQELL</sequence>
<accession>Q8BI72</accession>
<gene>
    <name type="primary">Cdkn2aip</name>
    <name type="synonym">Carf</name>
</gene>
<keyword id="KW-0007">Acetylation</keyword>
<keyword id="KW-1017">Isopeptide bond</keyword>
<keyword id="KW-0539">Nucleus</keyword>
<keyword id="KW-0597">Phosphoprotein</keyword>
<keyword id="KW-1185">Reference proteome</keyword>
<keyword id="KW-0694">RNA-binding</keyword>
<keyword id="KW-0832">Ubl conjugation</keyword>
<evidence type="ECO:0000250" key="1">
    <source>
        <dbReference type="UniProtKB" id="Q9NXV6"/>
    </source>
</evidence>
<evidence type="ECO:0000255" key="2">
    <source>
        <dbReference type="PROSITE-ProRule" id="PRU00266"/>
    </source>
</evidence>
<evidence type="ECO:0000255" key="3">
    <source>
        <dbReference type="PROSITE-ProRule" id="PRU01171"/>
    </source>
</evidence>
<evidence type="ECO:0000256" key="4">
    <source>
        <dbReference type="SAM" id="MobiDB-lite"/>
    </source>
</evidence>
<evidence type="ECO:0000305" key="5"/>
<evidence type="ECO:0007744" key="6">
    <source>
    </source>
</evidence>
<reference key="1">
    <citation type="journal article" date="2005" name="Science">
        <title>The transcriptional landscape of the mammalian genome.</title>
        <authorList>
            <person name="Carninci P."/>
            <person name="Kasukawa T."/>
            <person name="Katayama S."/>
            <person name="Gough J."/>
            <person name="Frith M.C."/>
            <person name="Maeda N."/>
            <person name="Oyama R."/>
            <person name="Ravasi T."/>
            <person name="Lenhard B."/>
            <person name="Wells C."/>
            <person name="Kodzius R."/>
            <person name="Shimokawa K."/>
            <person name="Bajic V.B."/>
            <person name="Brenner S.E."/>
            <person name="Batalov S."/>
            <person name="Forrest A.R."/>
            <person name="Zavolan M."/>
            <person name="Davis M.J."/>
            <person name="Wilming L.G."/>
            <person name="Aidinis V."/>
            <person name="Allen J.E."/>
            <person name="Ambesi-Impiombato A."/>
            <person name="Apweiler R."/>
            <person name="Aturaliya R.N."/>
            <person name="Bailey T.L."/>
            <person name="Bansal M."/>
            <person name="Baxter L."/>
            <person name="Beisel K.W."/>
            <person name="Bersano T."/>
            <person name="Bono H."/>
            <person name="Chalk A.M."/>
            <person name="Chiu K.P."/>
            <person name="Choudhary V."/>
            <person name="Christoffels A."/>
            <person name="Clutterbuck D.R."/>
            <person name="Crowe M.L."/>
            <person name="Dalla E."/>
            <person name="Dalrymple B.P."/>
            <person name="de Bono B."/>
            <person name="Della Gatta G."/>
            <person name="di Bernardo D."/>
            <person name="Down T."/>
            <person name="Engstrom P."/>
            <person name="Fagiolini M."/>
            <person name="Faulkner G."/>
            <person name="Fletcher C.F."/>
            <person name="Fukushima T."/>
            <person name="Furuno M."/>
            <person name="Futaki S."/>
            <person name="Gariboldi M."/>
            <person name="Georgii-Hemming P."/>
            <person name="Gingeras T.R."/>
            <person name="Gojobori T."/>
            <person name="Green R.E."/>
            <person name="Gustincich S."/>
            <person name="Harbers M."/>
            <person name="Hayashi Y."/>
            <person name="Hensch T.K."/>
            <person name="Hirokawa N."/>
            <person name="Hill D."/>
            <person name="Huminiecki L."/>
            <person name="Iacono M."/>
            <person name="Ikeo K."/>
            <person name="Iwama A."/>
            <person name="Ishikawa T."/>
            <person name="Jakt M."/>
            <person name="Kanapin A."/>
            <person name="Katoh M."/>
            <person name="Kawasawa Y."/>
            <person name="Kelso J."/>
            <person name="Kitamura H."/>
            <person name="Kitano H."/>
            <person name="Kollias G."/>
            <person name="Krishnan S.P."/>
            <person name="Kruger A."/>
            <person name="Kummerfeld S.K."/>
            <person name="Kurochkin I.V."/>
            <person name="Lareau L.F."/>
            <person name="Lazarevic D."/>
            <person name="Lipovich L."/>
            <person name="Liu J."/>
            <person name="Liuni S."/>
            <person name="McWilliam S."/>
            <person name="Madan Babu M."/>
            <person name="Madera M."/>
            <person name="Marchionni L."/>
            <person name="Matsuda H."/>
            <person name="Matsuzawa S."/>
            <person name="Miki H."/>
            <person name="Mignone F."/>
            <person name="Miyake S."/>
            <person name="Morris K."/>
            <person name="Mottagui-Tabar S."/>
            <person name="Mulder N."/>
            <person name="Nakano N."/>
            <person name="Nakauchi H."/>
            <person name="Ng P."/>
            <person name="Nilsson R."/>
            <person name="Nishiguchi S."/>
            <person name="Nishikawa S."/>
            <person name="Nori F."/>
            <person name="Ohara O."/>
            <person name="Okazaki Y."/>
            <person name="Orlando V."/>
            <person name="Pang K.C."/>
            <person name="Pavan W.J."/>
            <person name="Pavesi G."/>
            <person name="Pesole G."/>
            <person name="Petrovsky N."/>
            <person name="Piazza S."/>
            <person name="Reed J."/>
            <person name="Reid J.F."/>
            <person name="Ring B.Z."/>
            <person name="Ringwald M."/>
            <person name="Rost B."/>
            <person name="Ruan Y."/>
            <person name="Salzberg S.L."/>
            <person name="Sandelin A."/>
            <person name="Schneider C."/>
            <person name="Schoenbach C."/>
            <person name="Sekiguchi K."/>
            <person name="Semple C.A."/>
            <person name="Seno S."/>
            <person name="Sessa L."/>
            <person name="Sheng Y."/>
            <person name="Shibata Y."/>
            <person name="Shimada H."/>
            <person name="Shimada K."/>
            <person name="Silva D."/>
            <person name="Sinclair B."/>
            <person name="Sperling S."/>
            <person name="Stupka E."/>
            <person name="Sugiura K."/>
            <person name="Sultana R."/>
            <person name="Takenaka Y."/>
            <person name="Taki K."/>
            <person name="Tammoja K."/>
            <person name="Tan S.L."/>
            <person name="Tang S."/>
            <person name="Taylor M.S."/>
            <person name="Tegner J."/>
            <person name="Teichmann S.A."/>
            <person name="Ueda H.R."/>
            <person name="van Nimwegen E."/>
            <person name="Verardo R."/>
            <person name="Wei C.L."/>
            <person name="Yagi K."/>
            <person name="Yamanishi H."/>
            <person name="Zabarovsky E."/>
            <person name="Zhu S."/>
            <person name="Zimmer A."/>
            <person name="Hide W."/>
            <person name="Bult C."/>
            <person name="Grimmond S.M."/>
            <person name="Teasdale R.D."/>
            <person name="Liu E.T."/>
            <person name="Brusic V."/>
            <person name="Quackenbush J."/>
            <person name="Wahlestedt C."/>
            <person name="Mattick J.S."/>
            <person name="Hume D.A."/>
            <person name="Kai C."/>
            <person name="Sasaki D."/>
            <person name="Tomaru Y."/>
            <person name="Fukuda S."/>
            <person name="Kanamori-Katayama M."/>
            <person name="Suzuki M."/>
            <person name="Aoki J."/>
            <person name="Arakawa T."/>
            <person name="Iida J."/>
            <person name="Imamura K."/>
            <person name="Itoh M."/>
            <person name="Kato T."/>
            <person name="Kawaji H."/>
            <person name="Kawagashira N."/>
            <person name="Kawashima T."/>
            <person name="Kojima M."/>
            <person name="Kondo S."/>
            <person name="Konno H."/>
            <person name="Nakano K."/>
            <person name="Ninomiya N."/>
            <person name="Nishio T."/>
            <person name="Okada M."/>
            <person name="Plessy C."/>
            <person name="Shibata K."/>
            <person name="Shiraki T."/>
            <person name="Suzuki S."/>
            <person name="Tagami M."/>
            <person name="Waki K."/>
            <person name="Watahiki A."/>
            <person name="Okamura-Oho Y."/>
            <person name="Suzuki H."/>
            <person name="Kawai J."/>
            <person name="Hayashizaki Y."/>
        </authorList>
    </citation>
    <scope>NUCLEOTIDE SEQUENCE [LARGE SCALE MRNA]</scope>
    <source>
        <strain>C57BL/6J</strain>
        <tissue>Head</tissue>
    </source>
</reference>
<reference key="2">
    <citation type="journal article" date="2003" name="Exp. Gerontol.">
        <title>A novel putative collaborator of p19ARF.</title>
        <authorList>
            <person name="Wadhwa R."/>
            <person name="Sugihara T."/>
            <person name="Hasan M.K."/>
            <person name="Duncan E.L."/>
            <person name="Taira K."/>
            <person name="Kaul S.C."/>
        </authorList>
    </citation>
    <scope>IDENTIFICATION</scope>
</reference>
<reference key="3">
    <citation type="journal article" date="2010" name="Cell">
        <title>A tissue-specific atlas of mouse protein phosphorylation and expression.</title>
        <authorList>
            <person name="Huttlin E.L."/>
            <person name="Jedrychowski M.P."/>
            <person name="Elias J.E."/>
            <person name="Goswami T."/>
            <person name="Rad R."/>
            <person name="Beausoleil S.A."/>
            <person name="Villen J."/>
            <person name="Haas W."/>
            <person name="Sowa M.E."/>
            <person name="Gygi S.P."/>
        </authorList>
    </citation>
    <scope>PHOSPHORYLATION [LARGE SCALE ANALYSIS] AT SER-124 AND SER-234</scope>
    <scope>IDENTIFICATION BY MASS SPECTROMETRY [LARGE SCALE ANALYSIS]</scope>
    <source>
        <tissue>Brain</tissue>
        <tissue>Heart</tissue>
        <tissue>Kidney</tissue>
        <tissue>Liver</tissue>
        <tissue>Lung</tissue>
        <tissue>Pancreas</tissue>
        <tissue>Spleen</tissue>
        <tissue>Testis</tissue>
    </source>
</reference>
<name>CARF_MOUSE</name>